<comment type="function">
    <text evidence="1">Catalyzes the conversion of GTP to 2,5-diamino-6-ribosylamino-4(3H)-pyrimidinone 5'-phosphate (DARP), formate and pyrophosphate.</text>
</comment>
<comment type="catalytic activity">
    <reaction evidence="1">
        <text>GTP + 4 H2O = 2,5-diamino-6-hydroxy-4-(5-phosphoribosylamino)-pyrimidine + formate + 2 phosphate + 3 H(+)</text>
        <dbReference type="Rhea" id="RHEA:23704"/>
        <dbReference type="ChEBI" id="CHEBI:15377"/>
        <dbReference type="ChEBI" id="CHEBI:15378"/>
        <dbReference type="ChEBI" id="CHEBI:15740"/>
        <dbReference type="ChEBI" id="CHEBI:37565"/>
        <dbReference type="ChEBI" id="CHEBI:43474"/>
        <dbReference type="ChEBI" id="CHEBI:58614"/>
        <dbReference type="EC" id="3.5.4.25"/>
    </reaction>
</comment>
<comment type="cofactor">
    <cofactor evidence="1">
        <name>Zn(2+)</name>
        <dbReference type="ChEBI" id="CHEBI:29105"/>
    </cofactor>
    <text evidence="1">Binds 1 zinc ion per subunit.</text>
</comment>
<comment type="pathway">
    <text evidence="1">Cofactor biosynthesis; riboflavin biosynthesis; 5-amino-6-(D-ribitylamino)uracil from GTP: step 1/4.</text>
</comment>
<comment type="subunit">
    <text evidence="1">Homodimer.</text>
</comment>
<comment type="similarity">
    <text evidence="1">Belongs to the GTP cyclohydrolase II family.</text>
</comment>
<reference key="1">
    <citation type="submission" date="2006-09" db="EMBL/GenBank/DDBJ databases">
        <authorList>
            <consortium name="The Klebsiella pneumonia Genome Sequencing Project"/>
            <person name="McClelland M."/>
            <person name="Sanderson E.K."/>
            <person name="Spieth J."/>
            <person name="Clifton W.S."/>
            <person name="Latreille P."/>
            <person name="Sabo A."/>
            <person name="Pepin K."/>
            <person name="Bhonagiri V."/>
            <person name="Porwollik S."/>
            <person name="Ali J."/>
            <person name="Wilson R.K."/>
        </authorList>
    </citation>
    <scope>NUCLEOTIDE SEQUENCE [LARGE SCALE GENOMIC DNA]</scope>
    <source>
        <strain>ATCC 700721 / MGH 78578</strain>
    </source>
</reference>
<proteinExistence type="inferred from homology"/>
<feature type="chain" id="PRO_1000040569" description="GTP cyclohydrolase-2">
    <location>
        <begin position="1"/>
        <end position="200"/>
    </location>
</feature>
<feature type="active site" description="Proton acceptor" evidence="1">
    <location>
        <position position="126"/>
    </location>
</feature>
<feature type="active site" description="Nucleophile" evidence="1">
    <location>
        <position position="128"/>
    </location>
</feature>
<feature type="binding site" evidence="1">
    <location>
        <begin position="49"/>
        <end position="53"/>
    </location>
    <ligand>
        <name>GTP</name>
        <dbReference type="ChEBI" id="CHEBI:37565"/>
    </ligand>
</feature>
<feature type="binding site" evidence="1">
    <location>
        <position position="54"/>
    </location>
    <ligand>
        <name>Zn(2+)</name>
        <dbReference type="ChEBI" id="CHEBI:29105"/>
        <note>catalytic</note>
    </ligand>
</feature>
<feature type="binding site" evidence="1">
    <location>
        <position position="65"/>
    </location>
    <ligand>
        <name>Zn(2+)</name>
        <dbReference type="ChEBI" id="CHEBI:29105"/>
        <note>catalytic</note>
    </ligand>
</feature>
<feature type="binding site" evidence="1">
    <location>
        <position position="67"/>
    </location>
    <ligand>
        <name>Zn(2+)</name>
        <dbReference type="ChEBI" id="CHEBI:29105"/>
        <note>catalytic</note>
    </ligand>
</feature>
<feature type="binding site" evidence="1">
    <location>
        <position position="70"/>
    </location>
    <ligand>
        <name>GTP</name>
        <dbReference type="ChEBI" id="CHEBI:37565"/>
    </ligand>
</feature>
<feature type="binding site" evidence="1">
    <location>
        <begin position="92"/>
        <end position="94"/>
    </location>
    <ligand>
        <name>GTP</name>
        <dbReference type="ChEBI" id="CHEBI:37565"/>
    </ligand>
</feature>
<feature type="binding site" evidence="1">
    <location>
        <position position="114"/>
    </location>
    <ligand>
        <name>GTP</name>
        <dbReference type="ChEBI" id="CHEBI:37565"/>
    </ligand>
</feature>
<feature type="binding site" evidence="1">
    <location>
        <position position="149"/>
    </location>
    <ligand>
        <name>GTP</name>
        <dbReference type="ChEBI" id="CHEBI:37565"/>
    </ligand>
</feature>
<feature type="binding site" evidence="1">
    <location>
        <position position="154"/>
    </location>
    <ligand>
        <name>GTP</name>
        <dbReference type="ChEBI" id="CHEBI:37565"/>
    </ligand>
</feature>
<keyword id="KW-0342">GTP-binding</keyword>
<keyword id="KW-0378">Hydrolase</keyword>
<keyword id="KW-0479">Metal-binding</keyword>
<keyword id="KW-0547">Nucleotide-binding</keyword>
<keyword id="KW-0686">Riboflavin biosynthesis</keyword>
<keyword id="KW-0862">Zinc</keyword>
<gene>
    <name evidence="1" type="primary">ribA</name>
    <name type="ordered locus">KPN78578_12450</name>
    <name type="ORF">KPN_01273</name>
</gene>
<evidence type="ECO:0000255" key="1">
    <source>
        <dbReference type="HAMAP-Rule" id="MF_00179"/>
    </source>
</evidence>
<dbReference type="EC" id="3.5.4.25" evidence="1"/>
<dbReference type="EMBL" id="CP000647">
    <property type="protein sequence ID" value="ABR76706.1"/>
    <property type="molecule type" value="Genomic_DNA"/>
</dbReference>
<dbReference type="RefSeq" id="WP_002901778.1">
    <property type="nucleotide sequence ID" value="NC_009648.1"/>
</dbReference>
<dbReference type="SMR" id="A6T7Y5"/>
<dbReference type="STRING" id="272620.KPN_01273"/>
<dbReference type="jPOST" id="A6T7Y5"/>
<dbReference type="PaxDb" id="272620-KPN_01273"/>
<dbReference type="EnsemblBacteria" id="ABR76706">
    <property type="protein sequence ID" value="ABR76706"/>
    <property type="gene ID" value="KPN_01273"/>
</dbReference>
<dbReference type="KEGG" id="kpn:KPN_01273"/>
<dbReference type="HOGENOM" id="CLU_020273_2_1_6"/>
<dbReference type="UniPathway" id="UPA00275">
    <property type="reaction ID" value="UER00400"/>
</dbReference>
<dbReference type="Proteomes" id="UP000000265">
    <property type="component" value="Chromosome"/>
</dbReference>
<dbReference type="GO" id="GO:0005829">
    <property type="term" value="C:cytosol"/>
    <property type="evidence" value="ECO:0007669"/>
    <property type="project" value="TreeGrafter"/>
</dbReference>
<dbReference type="GO" id="GO:0005525">
    <property type="term" value="F:GTP binding"/>
    <property type="evidence" value="ECO:0007669"/>
    <property type="project" value="UniProtKB-KW"/>
</dbReference>
<dbReference type="GO" id="GO:0003935">
    <property type="term" value="F:GTP cyclohydrolase II activity"/>
    <property type="evidence" value="ECO:0007669"/>
    <property type="project" value="UniProtKB-UniRule"/>
</dbReference>
<dbReference type="GO" id="GO:0008270">
    <property type="term" value="F:zinc ion binding"/>
    <property type="evidence" value="ECO:0007669"/>
    <property type="project" value="UniProtKB-UniRule"/>
</dbReference>
<dbReference type="GO" id="GO:0009231">
    <property type="term" value="P:riboflavin biosynthetic process"/>
    <property type="evidence" value="ECO:0007669"/>
    <property type="project" value="UniProtKB-UniRule"/>
</dbReference>
<dbReference type="CDD" id="cd00641">
    <property type="entry name" value="GTP_cyclohydro2"/>
    <property type="match status" value="1"/>
</dbReference>
<dbReference type="FunFam" id="3.40.50.10990:FF:000002">
    <property type="entry name" value="GTP cyclohydrolase-2"/>
    <property type="match status" value="1"/>
</dbReference>
<dbReference type="Gene3D" id="3.40.50.10990">
    <property type="entry name" value="GTP cyclohydrolase II"/>
    <property type="match status" value="1"/>
</dbReference>
<dbReference type="HAMAP" id="MF_00179">
    <property type="entry name" value="RibA"/>
    <property type="match status" value="1"/>
</dbReference>
<dbReference type="InterPro" id="IPR032677">
    <property type="entry name" value="GTP_cyclohydro_II"/>
</dbReference>
<dbReference type="InterPro" id="IPR000926">
    <property type="entry name" value="RibA"/>
</dbReference>
<dbReference type="InterPro" id="IPR036144">
    <property type="entry name" value="RibA-like_sf"/>
</dbReference>
<dbReference type="NCBIfam" id="NF001591">
    <property type="entry name" value="PRK00393.1"/>
    <property type="match status" value="1"/>
</dbReference>
<dbReference type="NCBIfam" id="TIGR00505">
    <property type="entry name" value="ribA"/>
    <property type="match status" value="1"/>
</dbReference>
<dbReference type="PANTHER" id="PTHR21327:SF18">
    <property type="entry name" value="3,4-DIHYDROXY-2-BUTANONE 4-PHOSPHATE SYNTHASE"/>
    <property type="match status" value="1"/>
</dbReference>
<dbReference type="PANTHER" id="PTHR21327">
    <property type="entry name" value="GTP CYCLOHYDROLASE II-RELATED"/>
    <property type="match status" value="1"/>
</dbReference>
<dbReference type="Pfam" id="PF00925">
    <property type="entry name" value="GTP_cyclohydro2"/>
    <property type="match status" value="1"/>
</dbReference>
<dbReference type="SUPFAM" id="SSF142695">
    <property type="entry name" value="RibA-like"/>
    <property type="match status" value="1"/>
</dbReference>
<name>RIBA_KLEP7</name>
<accession>A6T7Y5</accession>
<protein>
    <recommendedName>
        <fullName evidence="1">GTP cyclohydrolase-2</fullName>
        <ecNumber evidence="1">3.5.4.25</ecNumber>
    </recommendedName>
    <alternativeName>
        <fullName evidence="1">GTP cyclohydrolase II</fullName>
    </alternativeName>
</protein>
<organism>
    <name type="scientific">Klebsiella pneumoniae subsp. pneumoniae (strain ATCC 700721 / MGH 78578)</name>
    <dbReference type="NCBI Taxonomy" id="272620"/>
    <lineage>
        <taxon>Bacteria</taxon>
        <taxon>Pseudomonadati</taxon>
        <taxon>Pseudomonadota</taxon>
        <taxon>Gammaproteobacteria</taxon>
        <taxon>Enterobacterales</taxon>
        <taxon>Enterobacteriaceae</taxon>
        <taxon>Klebsiella/Raoultella group</taxon>
        <taxon>Klebsiella</taxon>
        <taxon>Klebsiella pneumoniae complex</taxon>
    </lineage>
</organism>
<sequence length="200" mass="22182">MQLKRVAEAKLPTPWGDFLMVGFEELATGQDHVALVYGDISGQSPVLARVHSECLTGDALFSLRCDCGFQLEAALSHIAEEGRGILLYHRQEGRNIGLLNKIRAYALQDQGYDTVEANHQLGFAADERDFTLCADMFKLLNVEQVRLLTNNPKKVEILTEAGINIVERVPLIVGRNPKNAHYLDTKAAKMGHLLNSKPTE</sequence>